<reference key="1">
    <citation type="journal article" date="2009" name="J. Bacteriol.">
        <title>Complete genome sequence and comparative genome analysis of enteropathogenic Escherichia coli O127:H6 strain E2348/69.</title>
        <authorList>
            <person name="Iguchi A."/>
            <person name="Thomson N.R."/>
            <person name="Ogura Y."/>
            <person name="Saunders D."/>
            <person name="Ooka T."/>
            <person name="Henderson I.R."/>
            <person name="Harris D."/>
            <person name="Asadulghani M."/>
            <person name="Kurokawa K."/>
            <person name="Dean P."/>
            <person name="Kenny B."/>
            <person name="Quail M.A."/>
            <person name="Thurston S."/>
            <person name="Dougan G."/>
            <person name="Hayashi T."/>
            <person name="Parkhill J."/>
            <person name="Frankel G."/>
        </authorList>
    </citation>
    <scope>NUCLEOTIDE SEQUENCE [LARGE SCALE GENOMIC DNA]</scope>
    <source>
        <strain>E2348/69 / EPEC</strain>
    </source>
</reference>
<organism>
    <name type="scientific">Escherichia coli O127:H6 (strain E2348/69 / EPEC)</name>
    <dbReference type="NCBI Taxonomy" id="574521"/>
    <lineage>
        <taxon>Bacteria</taxon>
        <taxon>Pseudomonadati</taxon>
        <taxon>Pseudomonadota</taxon>
        <taxon>Gammaproteobacteria</taxon>
        <taxon>Enterobacterales</taxon>
        <taxon>Enterobacteriaceae</taxon>
        <taxon>Escherichia</taxon>
    </lineage>
</organism>
<comment type="function">
    <text evidence="1">Catalyzes the phosphorylation of N-acetylmannosamine (ManNAc) to ManNAc-6-P.</text>
</comment>
<comment type="catalytic activity">
    <reaction evidence="1">
        <text>an N-acyl-D-mannosamine + ATP = an N-acyl-D-mannosamine 6-phosphate + ADP + H(+)</text>
        <dbReference type="Rhea" id="RHEA:23832"/>
        <dbReference type="ChEBI" id="CHEBI:15378"/>
        <dbReference type="ChEBI" id="CHEBI:16062"/>
        <dbReference type="ChEBI" id="CHEBI:30616"/>
        <dbReference type="ChEBI" id="CHEBI:57666"/>
        <dbReference type="ChEBI" id="CHEBI:456216"/>
        <dbReference type="EC" id="2.7.1.60"/>
    </reaction>
</comment>
<comment type="pathway">
    <text evidence="1">Amino-sugar metabolism; N-acetylneuraminate degradation; D-fructose 6-phosphate from N-acetylneuraminate: step 2/5.</text>
</comment>
<comment type="subunit">
    <text evidence="1">Homodimer.</text>
</comment>
<comment type="similarity">
    <text evidence="1">Belongs to the ROK (NagC/XylR) family. NanK subfamily.</text>
</comment>
<proteinExistence type="inferred from homology"/>
<protein>
    <recommendedName>
        <fullName evidence="1">N-acetylmannosamine kinase</fullName>
        <ecNumber evidence="1">2.7.1.60</ecNumber>
    </recommendedName>
    <alternativeName>
        <fullName evidence="1">ManNAc kinase</fullName>
    </alternativeName>
    <alternativeName>
        <fullName evidence="1">N-acetyl-D-mannosamine kinase</fullName>
    </alternativeName>
</protein>
<name>NANK_ECO27</name>
<gene>
    <name evidence="1" type="primary">nanK</name>
    <name type="ordered locus">E2348C_3494</name>
</gene>
<accession>B7UJV5</accession>
<dbReference type="EC" id="2.7.1.60" evidence="1"/>
<dbReference type="EMBL" id="FM180568">
    <property type="protein sequence ID" value="CAS11042.1"/>
    <property type="molecule type" value="Genomic_DNA"/>
</dbReference>
<dbReference type="RefSeq" id="WP_000209053.1">
    <property type="nucleotide sequence ID" value="NC_011601.1"/>
</dbReference>
<dbReference type="SMR" id="B7UJV5"/>
<dbReference type="KEGG" id="ecg:E2348C_3494"/>
<dbReference type="HOGENOM" id="CLU_036604_0_4_6"/>
<dbReference type="UniPathway" id="UPA00629">
    <property type="reaction ID" value="UER00681"/>
</dbReference>
<dbReference type="Proteomes" id="UP000008205">
    <property type="component" value="Chromosome"/>
</dbReference>
<dbReference type="GO" id="GO:0005524">
    <property type="term" value="F:ATP binding"/>
    <property type="evidence" value="ECO:0007669"/>
    <property type="project" value="UniProtKB-UniRule"/>
</dbReference>
<dbReference type="GO" id="GO:0009384">
    <property type="term" value="F:N-acylmannosamine kinase activity"/>
    <property type="evidence" value="ECO:0007669"/>
    <property type="project" value="UniProtKB-UniRule"/>
</dbReference>
<dbReference type="GO" id="GO:0008270">
    <property type="term" value="F:zinc ion binding"/>
    <property type="evidence" value="ECO:0007669"/>
    <property type="project" value="UniProtKB-UniRule"/>
</dbReference>
<dbReference type="GO" id="GO:0019262">
    <property type="term" value="P:N-acetylneuraminate catabolic process"/>
    <property type="evidence" value="ECO:0007669"/>
    <property type="project" value="UniProtKB-UniRule"/>
</dbReference>
<dbReference type="CDD" id="cd24069">
    <property type="entry name" value="ASKHA_NBD_ROK_EcNanK-like"/>
    <property type="match status" value="1"/>
</dbReference>
<dbReference type="FunFam" id="3.30.420.40:FF:000062">
    <property type="entry name" value="N-acetylmannosamine kinase"/>
    <property type="match status" value="1"/>
</dbReference>
<dbReference type="FunFam" id="3.30.420.40:FF:000063">
    <property type="entry name" value="N-acetylmannosamine kinase"/>
    <property type="match status" value="1"/>
</dbReference>
<dbReference type="Gene3D" id="3.30.420.40">
    <property type="match status" value="2"/>
</dbReference>
<dbReference type="HAMAP" id="MF_01234">
    <property type="entry name" value="ManNAc_kinase"/>
    <property type="match status" value="1"/>
</dbReference>
<dbReference type="InterPro" id="IPR043129">
    <property type="entry name" value="ATPase_NBD"/>
</dbReference>
<dbReference type="InterPro" id="IPR023945">
    <property type="entry name" value="ManNAc_kinase_bac"/>
</dbReference>
<dbReference type="InterPro" id="IPR000600">
    <property type="entry name" value="ROK"/>
</dbReference>
<dbReference type="InterPro" id="IPR049874">
    <property type="entry name" value="ROK_cs"/>
</dbReference>
<dbReference type="NCBIfam" id="NF047821">
    <property type="entry name" value="NactlManKinNanK"/>
    <property type="match status" value="1"/>
</dbReference>
<dbReference type="NCBIfam" id="NF003461">
    <property type="entry name" value="PRK05082.1"/>
    <property type="match status" value="1"/>
</dbReference>
<dbReference type="PANTHER" id="PTHR18964:SF169">
    <property type="entry name" value="N-ACETYLMANNOSAMINE KINASE"/>
    <property type="match status" value="1"/>
</dbReference>
<dbReference type="PANTHER" id="PTHR18964">
    <property type="entry name" value="ROK (REPRESSOR, ORF, KINASE) FAMILY"/>
    <property type="match status" value="1"/>
</dbReference>
<dbReference type="Pfam" id="PF00480">
    <property type="entry name" value="ROK"/>
    <property type="match status" value="1"/>
</dbReference>
<dbReference type="SUPFAM" id="SSF53067">
    <property type="entry name" value="Actin-like ATPase domain"/>
    <property type="match status" value="1"/>
</dbReference>
<dbReference type="PROSITE" id="PS01125">
    <property type="entry name" value="ROK"/>
    <property type="match status" value="1"/>
</dbReference>
<keyword id="KW-0067">ATP-binding</keyword>
<keyword id="KW-0119">Carbohydrate metabolism</keyword>
<keyword id="KW-0418">Kinase</keyword>
<keyword id="KW-0479">Metal-binding</keyword>
<keyword id="KW-0547">Nucleotide-binding</keyword>
<keyword id="KW-1185">Reference proteome</keyword>
<keyword id="KW-0808">Transferase</keyword>
<keyword id="KW-0862">Zinc</keyword>
<sequence length="291" mass="29695">MTTLAIDIGGTKLAAALIGADGQIRDRRELPTPASQTPQALRDALSALVSPLQAHAQRVAIASTGIIRDGSLLALNPHNLGGLLHFPLVKTLEQLTNLPTIAINDAQAAAWAEYQALDGDITDIVFITVSTGVGGGVVSGGKLRTGPGGLAGHIGHTLADPHGPVCGCGRTGCVEAIASGRGIAAAAQGELAGANAKTIFTRAGQGDEQAQQLIHRSARTLARLIADIKATTDCQCVVVGGSVGLAEGYLALVETYLAQEPEAFHVDLLAAHYRHDAGLLGAALLAQGEKL</sequence>
<feature type="chain" id="PRO_1000164988" description="N-acetylmannosamine kinase">
    <location>
        <begin position="1"/>
        <end position="291"/>
    </location>
</feature>
<feature type="binding site" evidence="1">
    <location>
        <begin position="5"/>
        <end position="12"/>
    </location>
    <ligand>
        <name>ATP</name>
        <dbReference type="ChEBI" id="CHEBI:30616"/>
    </ligand>
</feature>
<feature type="binding site" evidence="1">
    <location>
        <begin position="132"/>
        <end position="139"/>
    </location>
    <ligand>
        <name>ATP</name>
        <dbReference type="ChEBI" id="CHEBI:30616"/>
    </ligand>
</feature>
<feature type="binding site" evidence="1">
    <location>
        <position position="156"/>
    </location>
    <ligand>
        <name>Zn(2+)</name>
        <dbReference type="ChEBI" id="CHEBI:29105"/>
    </ligand>
</feature>
<feature type="binding site" evidence="1">
    <location>
        <position position="166"/>
    </location>
    <ligand>
        <name>Zn(2+)</name>
        <dbReference type="ChEBI" id="CHEBI:29105"/>
    </ligand>
</feature>
<feature type="binding site" evidence="1">
    <location>
        <position position="168"/>
    </location>
    <ligand>
        <name>Zn(2+)</name>
        <dbReference type="ChEBI" id="CHEBI:29105"/>
    </ligand>
</feature>
<feature type="binding site" evidence="1">
    <location>
        <position position="173"/>
    </location>
    <ligand>
        <name>Zn(2+)</name>
        <dbReference type="ChEBI" id="CHEBI:29105"/>
    </ligand>
</feature>
<evidence type="ECO:0000255" key="1">
    <source>
        <dbReference type="HAMAP-Rule" id="MF_01234"/>
    </source>
</evidence>